<reference key="1">
    <citation type="journal article" date="2006" name="Genome Res.">
        <title>Massive genome erosion and functional adaptations provide insights into the symbiotic lifestyle of Sodalis glossinidius in the tsetse host.</title>
        <authorList>
            <person name="Toh H."/>
            <person name="Weiss B.L."/>
            <person name="Perkin S.A.H."/>
            <person name="Yamashita A."/>
            <person name="Oshima K."/>
            <person name="Hattori M."/>
            <person name="Aksoy S."/>
        </authorList>
    </citation>
    <scope>NUCLEOTIDE SEQUENCE [LARGE SCALE GENOMIC DNA]</scope>
    <source>
        <strain>morsitans</strain>
    </source>
</reference>
<name>HIS1_SODGM</name>
<gene>
    <name evidence="1" type="primary">hisG</name>
    <name type="ordered locus">SG1130</name>
</gene>
<feature type="chain" id="PRO_1000004510" description="ATP phosphoribosyltransferase">
    <location>
        <begin position="1"/>
        <end position="299"/>
    </location>
</feature>
<dbReference type="EC" id="2.4.2.17" evidence="1"/>
<dbReference type="EMBL" id="AP008232">
    <property type="protein sequence ID" value="BAE74405.1"/>
    <property type="molecule type" value="Genomic_DNA"/>
</dbReference>
<dbReference type="RefSeq" id="WP_011410965.1">
    <property type="nucleotide sequence ID" value="NC_007712.1"/>
</dbReference>
<dbReference type="SMR" id="Q2NTX0"/>
<dbReference type="STRING" id="343509.SG1130"/>
<dbReference type="KEGG" id="sgl:SG1130"/>
<dbReference type="eggNOG" id="COG0040">
    <property type="taxonomic scope" value="Bacteria"/>
</dbReference>
<dbReference type="HOGENOM" id="CLU_038115_1_0_6"/>
<dbReference type="OrthoDB" id="9801867at2"/>
<dbReference type="BioCyc" id="SGLO343509:SGP1_RS09675-MONOMER"/>
<dbReference type="UniPathway" id="UPA00031">
    <property type="reaction ID" value="UER00006"/>
</dbReference>
<dbReference type="Proteomes" id="UP000001932">
    <property type="component" value="Chromosome"/>
</dbReference>
<dbReference type="GO" id="GO:0005737">
    <property type="term" value="C:cytoplasm"/>
    <property type="evidence" value="ECO:0007669"/>
    <property type="project" value="UniProtKB-SubCell"/>
</dbReference>
<dbReference type="GO" id="GO:0005524">
    <property type="term" value="F:ATP binding"/>
    <property type="evidence" value="ECO:0007669"/>
    <property type="project" value="UniProtKB-KW"/>
</dbReference>
<dbReference type="GO" id="GO:0003879">
    <property type="term" value="F:ATP phosphoribosyltransferase activity"/>
    <property type="evidence" value="ECO:0007669"/>
    <property type="project" value="UniProtKB-UniRule"/>
</dbReference>
<dbReference type="GO" id="GO:0000287">
    <property type="term" value="F:magnesium ion binding"/>
    <property type="evidence" value="ECO:0007669"/>
    <property type="project" value="UniProtKB-UniRule"/>
</dbReference>
<dbReference type="GO" id="GO:0000105">
    <property type="term" value="P:L-histidine biosynthetic process"/>
    <property type="evidence" value="ECO:0007669"/>
    <property type="project" value="UniProtKB-UniRule"/>
</dbReference>
<dbReference type="CDD" id="cd13592">
    <property type="entry name" value="PBP2_HisGL2"/>
    <property type="match status" value="1"/>
</dbReference>
<dbReference type="FunFam" id="3.30.70.120:FF:000002">
    <property type="entry name" value="ATP phosphoribosyltransferase"/>
    <property type="match status" value="1"/>
</dbReference>
<dbReference type="FunFam" id="3.40.190.10:FF:000008">
    <property type="entry name" value="ATP phosphoribosyltransferase"/>
    <property type="match status" value="1"/>
</dbReference>
<dbReference type="Gene3D" id="3.30.70.120">
    <property type="match status" value="1"/>
</dbReference>
<dbReference type="Gene3D" id="3.40.190.10">
    <property type="entry name" value="Periplasmic binding protein-like II"/>
    <property type="match status" value="2"/>
</dbReference>
<dbReference type="HAMAP" id="MF_00079">
    <property type="entry name" value="HisG_Long"/>
    <property type="match status" value="1"/>
</dbReference>
<dbReference type="InterPro" id="IPR020621">
    <property type="entry name" value="ATP-PRT_HisG_long"/>
</dbReference>
<dbReference type="InterPro" id="IPR013820">
    <property type="entry name" value="ATP_PRibTrfase_cat"/>
</dbReference>
<dbReference type="InterPro" id="IPR018198">
    <property type="entry name" value="ATP_PRibTrfase_CS"/>
</dbReference>
<dbReference type="InterPro" id="IPR001348">
    <property type="entry name" value="ATP_PRibTrfase_HisG"/>
</dbReference>
<dbReference type="InterPro" id="IPR013115">
    <property type="entry name" value="HisG_C"/>
</dbReference>
<dbReference type="InterPro" id="IPR011322">
    <property type="entry name" value="N-reg_PII-like_a/b"/>
</dbReference>
<dbReference type="InterPro" id="IPR015867">
    <property type="entry name" value="N-reg_PII/ATP_PRibTrfase_C"/>
</dbReference>
<dbReference type="NCBIfam" id="TIGR00070">
    <property type="entry name" value="hisG"/>
    <property type="match status" value="1"/>
</dbReference>
<dbReference type="NCBIfam" id="TIGR03455">
    <property type="entry name" value="HisG_C-term"/>
    <property type="match status" value="1"/>
</dbReference>
<dbReference type="PANTHER" id="PTHR21403:SF8">
    <property type="entry name" value="ATP PHOSPHORIBOSYLTRANSFERASE"/>
    <property type="match status" value="1"/>
</dbReference>
<dbReference type="PANTHER" id="PTHR21403">
    <property type="entry name" value="ATP PHOSPHORIBOSYLTRANSFERASE ATP-PRTASE"/>
    <property type="match status" value="1"/>
</dbReference>
<dbReference type="Pfam" id="PF01634">
    <property type="entry name" value="HisG"/>
    <property type="match status" value="1"/>
</dbReference>
<dbReference type="Pfam" id="PF08029">
    <property type="entry name" value="HisG_C"/>
    <property type="match status" value="1"/>
</dbReference>
<dbReference type="SUPFAM" id="SSF54913">
    <property type="entry name" value="GlnB-like"/>
    <property type="match status" value="1"/>
</dbReference>
<dbReference type="SUPFAM" id="SSF53850">
    <property type="entry name" value="Periplasmic binding protein-like II"/>
    <property type="match status" value="1"/>
</dbReference>
<dbReference type="PROSITE" id="PS01316">
    <property type="entry name" value="ATP_P_PHORIBOSYLTR"/>
    <property type="match status" value="1"/>
</dbReference>
<accession>Q2NTX0</accession>
<proteinExistence type="inferred from homology"/>
<comment type="function">
    <text evidence="1">Catalyzes the condensation of ATP and 5-phosphoribose 1-diphosphate to form N'-(5'-phosphoribosyl)-ATP (PR-ATP). Has a crucial role in the pathway because the rate of histidine biosynthesis seems to be controlled primarily by regulation of HisG enzymatic activity.</text>
</comment>
<comment type="catalytic activity">
    <reaction evidence="1">
        <text>1-(5-phospho-beta-D-ribosyl)-ATP + diphosphate = 5-phospho-alpha-D-ribose 1-diphosphate + ATP</text>
        <dbReference type="Rhea" id="RHEA:18473"/>
        <dbReference type="ChEBI" id="CHEBI:30616"/>
        <dbReference type="ChEBI" id="CHEBI:33019"/>
        <dbReference type="ChEBI" id="CHEBI:58017"/>
        <dbReference type="ChEBI" id="CHEBI:73183"/>
        <dbReference type="EC" id="2.4.2.17"/>
    </reaction>
</comment>
<comment type="cofactor">
    <cofactor evidence="1">
        <name>Mg(2+)</name>
        <dbReference type="ChEBI" id="CHEBI:18420"/>
    </cofactor>
</comment>
<comment type="activity regulation">
    <text evidence="1">Feedback inhibited by histidine.</text>
</comment>
<comment type="pathway">
    <text evidence="1">Amino-acid biosynthesis; L-histidine biosynthesis; L-histidine from 5-phospho-alpha-D-ribose 1-diphosphate: step 1/9.</text>
</comment>
<comment type="subunit">
    <text evidence="1">Equilibrium between an active dimeric form, an inactive hexameric form and higher aggregates. Interconversion between the various forms is largely reversible and is influenced by the natural substrates and inhibitors of the enzyme.</text>
</comment>
<comment type="subcellular location">
    <subcellularLocation>
        <location evidence="1">Cytoplasm</location>
    </subcellularLocation>
</comment>
<comment type="similarity">
    <text evidence="1">Belongs to the ATP phosphoribosyltransferase family. Long subfamily.</text>
</comment>
<protein>
    <recommendedName>
        <fullName evidence="1">ATP phosphoribosyltransferase</fullName>
        <shortName evidence="1">ATP-PRT</shortName>
        <shortName evidence="1">ATP-PRTase</shortName>
        <ecNumber evidence="1">2.4.2.17</ecNumber>
    </recommendedName>
</protein>
<sequence length="299" mass="33415">MLDKSRLRIAMQKSGRLSKESQQLLEQCGIKINLQQQRLLAFAENMPIDIMRVRDDDIPGLVMDDVVDLGIIGENVLEEELLTRRAQGEDPRYFTLRQLDFGGCRLSIALLLDTPWTGPECLRGKRIATSYPHLLKQYLDKLDITFKSCLLNGSVEVAPRAGLADAICDLVSTGATLEANGLREAEVIYRSKACLIQRDGELSVAKQSLVDKLLIRIQGVIQARESKYIMMHAPTERLDDIISLLTGAEQPTILPLAGDQHRVAMHMVSSETLFWETMENLKALGASSILVLPIEKMME</sequence>
<organism>
    <name type="scientific">Sodalis glossinidius (strain morsitans)</name>
    <dbReference type="NCBI Taxonomy" id="343509"/>
    <lineage>
        <taxon>Bacteria</taxon>
        <taxon>Pseudomonadati</taxon>
        <taxon>Pseudomonadota</taxon>
        <taxon>Gammaproteobacteria</taxon>
        <taxon>Enterobacterales</taxon>
        <taxon>Bruguierivoracaceae</taxon>
        <taxon>Sodalis</taxon>
    </lineage>
</organism>
<evidence type="ECO:0000255" key="1">
    <source>
        <dbReference type="HAMAP-Rule" id="MF_00079"/>
    </source>
</evidence>
<keyword id="KW-0028">Amino-acid biosynthesis</keyword>
<keyword id="KW-0067">ATP-binding</keyword>
<keyword id="KW-0963">Cytoplasm</keyword>
<keyword id="KW-0328">Glycosyltransferase</keyword>
<keyword id="KW-0368">Histidine biosynthesis</keyword>
<keyword id="KW-0460">Magnesium</keyword>
<keyword id="KW-0479">Metal-binding</keyword>
<keyword id="KW-0547">Nucleotide-binding</keyword>
<keyword id="KW-0808">Transferase</keyword>